<dbReference type="EC" id="2.1.1.-" evidence="1"/>
<dbReference type="EMBL" id="CP000384">
    <property type="protein sequence ID" value="ABG11508.1"/>
    <property type="molecule type" value="Genomic_DNA"/>
</dbReference>
<dbReference type="SMR" id="Q1B0S6"/>
<dbReference type="KEGG" id="mmc:Mmcs_5408"/>
<dbReference type="HOGENOM" id="CLU_065341_5_0_11"/>
<dbReference type="BioCyc" id="MSP164756:G1G6O-5520-MONOMER"/>
<dbReference type="GO" id="GO:0005829">
    <property type="term" value="C:cytosol"/>
    <property type="evidence" value="ECO:0007669"/>
    <property type="project" value="TreeGrafter"/>
</dbReference>
<dbReference type="GO" id="GO:0070043">
    <property type="term" value="F:rRNA (guanine-N7-)-methyltransferase activity"/>
    <property type="evidence" value="ECO:0007669"/>
    <property type="project" value="UniProtKB-UniRule"/>
</dbReference>
<dbReference type="CDD" id="cd02440">
    <property type="entry name" value="AdoMet_MTases"/>
    <property type="match status" value="1"/>
</dbReference>
<dbReference type="Gene3D" id="3.40.50.150">
    <property type="entry name" value="Vaccinia Virus protein VP39"/>
    <property type="match status" value="1"/>
</dbReference>
<dbReference type="HAMAP" id="MF_00074">
    <property type="entry name" value="16SrRNA_methyltr_G"/>
    <property type="match status" value="1"/>
</dbReference>
<dbReference type="InterPro" id="IPR003682">
    <property type="entry name" value="rRNA_ssu_MeTfrase_G"/>
</dbReference>
<dbReference type="InterPro" id="IPR029063">
    <property type="entry name" value="SAM-dependent_MTases_sf"/>
</dbReference>
<dbReference type="NCBIfam" id="TIGR00138">
    <property type="entry name" value="rsmG_gidB"/>
    <property type="match status" value="1"/>
</dbReference>
<dbReference type="PANTHER" id="PTHR31760">
    <property type="entry name" value="S-ADENOSYL-L-METHIONINE-DEPENDENT METHYLTRANSFERASES SUPERFAMILY PROTEIN"/>
    <property type="match status" value="1"/>
</dbReference>
<dbReference type="PANTHER" id="PTHR31760:SF0">
    <property type="entry name" value="S-ADENOSYL-L-METHIONINE-DEPENDENT METHYLTRANSFERASES SUPERFAMILY PROTEIN"/>
    <property type="match status" value="1"/>
</dbReference>
<dbReference type="Pfam" id="PF02527">
    <property type="entry name" value="GidB"/>
    <property type="match status" value="1"/>
</dbReference>
<dbReference type="PIRSF" id="PIRSF003078">
    <property type="entry name" value="GidB"/>
    <property type="match status" value="1"/>
</dbReference>
<dbReference type="SUPFAM" id="SSF53335">
    <property type="entry name" value="S-adenosyl-L-methionine-dependent methyltransferases"/>
    <property type="match status" value="1"/>
</dbReference>
<sequence length="225" mass="24179">MKHVAPPPTAEAVFGDRLPLAQRYAEFLATAGVERGLIGPRETDRIWDRHILNSAALGESVESGDRIADIGSGAGLPGIPLALARPDVHVTLIEPMQRRCEFLTEVVDALGVAVIVVRGRAENPAVRREVGEMDVVTSRAVGSLDKLATWSMGILREGGRMLALKGARAEAEIEENRRVLARAGAVDVRVLRCGADYLNPPATVVEARRATPSNGRGRPGRSSRR</sequence>
<accession>Q1B0S6</accession>
<protein>
    <recommendedName>
        <fullName evidence="1">Ribosomal RNA small subunit methyltransferase G</fullName>
        <ecNumber evidence="1">2.1.1.-</ecNumber>
    </recommendedName>
    <alternativeName>
        <fullName evidence="1">16S rRNA 7-methylguanosine methyltransferase</fullName>
        <shortName evidence="1">16S rRNA m7G methyltransferase</shortName>
    </alternativeName>
</protein>
<gene>
    <name evidence="1" type="primary">rsmG</name>
    <name type="ordered locus">Mmcs_5408</name>
</gene>
<name>RSMG_MYCSS</name>
<reference key="1">
    <citation type="submission" date="2006-06" db="EMBL/GenBank/DDBJ databases">
        <title>Complete sequence of chromosome of Mycobacterium sp. MCS.</title>
        <authorList>
            <consortium name="US DOE Joint Genome Institute"/>
            <person name="Copeland A."/>
            <person name="Lucas S."/>
            <person name="Lapidus A."/>
            <person name="Barry K."/>
            <person name="Detter J.C."/>
            <person name="Glavina del Rio T."/>
            <person name="Hammon N."/>
            <person name="Israni S."/>
            <person name="Dalin E."/>
            <person name="Tice H."/>
            <person name="Pitluck S."/>
            <person name="Martinez M."/>
            <person name="Schmutz J."/>
            <person name="Larimer F."/>
            <person name="Land M."/>
            <person name="Hauser L."/>
            <person name="Kyrpides N."/>
            <person name="Kim E."/>
            <person name="Miller C.D."/>
            <person name="Hughes J.E."/>
            <person name="Anderson A.J."/>
            <person name="Sims R.C."/>
            <person name="Richardson P."/>
        </authorList>
    </citation>
    <scope>NUCLEOTIDE SEQUENCE [LARGE SCALE GENOMIC DNA]</scope>
    <source>
        <strain>MCS</strain>
    </source>
</reference>
<feature type="chain" id="PRO_0000335379" description="Ribosomal RNA small subunit methyltransferase G">
    <location>
        <begin position="1"/>
        <end position="225"/>
    </location>
</feature>
<feature type="region of interest" description="Disordered" evidence="2">
    <location>
        <begin position="204"/>
        <end position="225"/>
    </location>
</feature>
<feature type="binding site" evidence="1">
    <location>
        <position position="71"/>
    </location>
    <ligand>
        <name>S-adenosyl-L-methionine</name>
        <dbReference type="ChEBI" id="CHEBI:59789"/>
    </ligand>
</feature>
<feature type="binding site" evidence="1">
    <location>
        <position position="76"/>
    </location>
    <ligand>
        <name>S-adenosyl-L-methionine</name>
        <dbReference type="ChEBI" id="CHEBI:59789"/>
    </ligand>
</feature>
<feature type="binding site" evidence="1">
    <location>
        <begin position="121"/>
        <end position="122"/>
    </location>
    <ligand>
        <name>S-adenosyl-L-methionine</name>
        <dbReference type="ChEBI" id="CHEBI:59789"/>
    </ligand>
</feature>
<feature type="binding site" evidence="1">
    <location>
        <position position="139"/>
    </location>
    <ligand>
        <name>S-adenosyl-L-methionine</name>
        <dbReference type="ChEBI" id="CHEBI:59789"/>
    </ligand>
</feature>
<keyword id="KW-0963">Cytoplasm</keyword>
<keyword id="KW-0489">Methyltransferase</keyword>
<keyword id="KW-0698">rRNA processing</keyword>
<keyword id="KW-0949">S-adenosyl-L-methionine</keyword>
<keyword id="KW-0808">Transferase</keyword>
<organism>
    <name type="scientific">Mycobacterium sp. (strain MCS)</name>
    <dbReference type="NCBI Taxonomy" id="164756"/>
    <lineage>
        <taxon>Bacteria</taxon>
        <taxon>Bacillati</taxon>
        <taxon>Actinomycetota</taxon>
        <taxon>Actinomycetes</taxon>
        <taxon>Mycobacteriales</taxon>
        <taxon>Mycobacteriaceae</taxon>
        <taxon>Mycobacterium</taxon>
    </lineage>
</organism>
<evidence type="ECO:0000255" key="1">
    <source>
        <dbReference type="HAMAP-Rule" id="MF_00074"/>
    </source>
</evidence>
<evidence type="ECO:0000256" key="2">
    <source>
        <dbReference type="SAM" id="MobiDB-lite"/>
    </source>
</evidence>
<proteinExistence type="inferred from homology"/>
<comment type="function">
    <text evidence="1">Specifically methylates the N7 position of guanine in position 518 of 16S rRNA.</text>
</comment>
<comment type="subcellular location">
    <subcellularLocation>
        <location evidence="1">Cytoplasm</location>
    </subcellularLocation>
</comment>
<comment type="similarity">
    <text evidence="1">Belongs to the methyltransferase superfamily. RNA methyltransferase RsmG family.</text>
</comment>